<dbReference type="EMBL" id="M11012">
    <property type="protein sequence ID" value="AAB03888.1"/>
    <property type="status" value="ALT_FRAME"/>
    <property type="molecule type" value="Genomic_DNA"/>
</dbReference>
<dbReference type="EMBL" id="AAFI02000013">
    <property type="protein sequence ID" value="EAL69598.1"/>
    <property type="molecule type" value="Genomic_DNA"/>
</dbReference>
<dbReference type="PIR" id="A23754">
    <property type="entry name" value="YPDOD1"/>
</dbReference>
<dbReference type="RefSeq" id="XP_643441.1">
    <property type="nucleotide sequence ID" value="XM_638349.1"/>
</dbReference>
<dbReference type="FunCoup" id="P05817">
    <property type="interactions" value="711"/>
</dbReference>
<dbReference type="PaxDb" id="44689-DDB0185088"/>
<dbReference type="EnsemblProtists" id="EAL69598">
    <property type="protein sequence ID" value="EAL69598"/>
    <property type="gene ID" value="DDB_G0275695"/>
</dbReference>
<dbReference type="GeneID" id="8620026"/>
<dbReference type="KEGG" id="ddi:DDB_G0275695"/>
<dbReference type="dictyBase" id="DDB_G0275695">
    <property type="gene designation" value="ampA"/>
</dbReference>
<dbReference type="VEuPathDB" id="AmoebaDB:DDB_G0275695"/>
<dbReference type="eggNOG" id="ENOG502RIDQ">
    <property type="taxonomic scope" value="Eukaryota"/>
</dbReference>
<dbReference type="HOGENOM" id="CLU_981513_0_0_1"/>
<dbReference type="InParanoid" id="P05817"/>
<dbReference type="PhylomeDB" id="P05817"/>
<dbReference type="PRO" id="PR:P05817"/>
<dbReference type="Proteomes" id="UP000002195">
    <property type="component" value="Chromosome 2"/>
</dbReference>
<dbReference type="GO" id="GO:0071944">
    <property type="term" value="C:cell periphery"/>
    <property type="evidence" value="ECO:0000314"/>
    <property type="project" value="dictyBase"/>
</dbReference>
<dbReference type="GO" id="GO:0005576">
    <property type="term" value="C:extracellular region"/>
    <property type="evidence" value="ECO:0000314"/>
    <property type="project" value="dictyBase"/>
</dbReference>
<dbReference type="GO" id="GO:0031982">
    <property type="term" value="C:vesicle"/>
    <property type="evidence" value="ECO:0000314"/>
    <property type="project" value="dictyBase"/>
</dbReference>
<dbReference type="GO" id="GO:0030041">
    <property type="term" value="P:actin filament polymerization"/>
    <property type="evidence" value="ECO:0000315"/>
    <property type="project" value="dictyBase"/>
</dbReference>
<dbReference type="GO" id="GO:0007155">
    <property type="term" value="P:cell adhesion"/>
    <property type="evidence" value="ECO:0000315"/>
    <property type="project" value="dictyBase"/>
</dbReference>
<dbReference type="GO" id="GO:0016477">
    <property type="term" value="P:cell migration"/>
    <property type="evidence" value="ECO:0000315"/>
    <property type="project" value="dictyBase"/>
</dbReference>
<dbReference type="GO" id="GO:0098609">
    <property type="term" value="P:cell-cell adhesion"/>
    <property type="evidence" value="ECO:0000315"/>
    <property type="project" value="dictyBase"/>
</dbReference>
<dbReference type="GO" id="GO:0031589">
    <property type="term" value="P:cell-substrate adhesion"/>
    <property type="evidence" value="ECO:0000315"/>
    <property type="project" value="dictyBase"/>
</dbReference>
<dbReference type="GO" id="GO:0043326">
    <property type="term" value="P:chemotaxis to folate"/>
    <property type="evidence" value="ECO:0000315"/>
    <property type="project" value="dictyBase"/>
</dbReference>
<dbReference type="GO" id="GO:0044351">
    <property type="term" value="P:macropinocytosis"/>
    <property type="evidence" value="ECO:0000315"/>
    <property type="project" value="dictyBase"/>
</dbReference>
<dbReference type="GO" id="GO:0007389">
    <property type="term" value="P:pattern specification process"/>
    <property type="evidence" value="ECO:0000315"/>
    <property type="project" value="dictyBase"/>
</dbReference>
<dbReference type="GO" id="GO:0030587">
    <property type="term" value="P:sorocarp development"/>
    <property type="evidence" value="ECO:0000315"/>
    <property type="project" value="dictyBase"/>
</dbReference>
<dbReference type="GO" id="GO:0031288">
    <property type="term" value="P:sorocarp morphogenesis"/>
    <property type="evidence" value="ECO:0000315"/>
    <property type="project" value="dictyBase"/>
</dbReference>
<feature type="signal peptide" evidence="1">
    <location>
        <begin position="1"/>
        <end position="25"/>
    </location>
</feature>
<feature type="chain" id="PRO_0000021058" description="Prestalk D11 protein">
    <location>
        <begin position="26"/>
        <end position="284"/>
    </location>
</feature>
<feature type="repeat" description="A-1">
    <location>
        <begin position="25"/>
        <end position="64"/>
    </location>
</feature>
<feature type="repeat" description="B-1">
    <location>
        <begin position="65"/>
        <end position="82"/>
    </location>
</feature>
<feature type="repeat" description="A-2">
    <location>
        <begin position="88"/>
        <end position="126"/>
    </location>
</feature>
<feature type="repeat" description="B-2">
    <location>
        <begin position="127"/>
        <end position="144"/>
    </location>
</feature>
<feature type="repeat" description="C-1">
    <location>
        <begin position="145"/>
        <end position="159"/>
    </location>
</feature>
<feature type="repeat" description="B-3">
    <location>
        <begin position="161"/>
        <end position="178"/>
    </location>
</feature>
<feature type="repeat" description="C-2">
    <location>
        <begin position="179"/>
        <end position="193"/>
    </location>
</feature>
<feature type="repeat" description="B-4">
    <location>
        <begin position="195"/>
        <end position="212"/>
    </location>
</feature>
<feature type="repeat" description="C-3">
    <location>
        <begin position="213"/>
        <end position="228"/>
    </location>
</feature>
<feature type="repeat" description="B-5">
    <location>
        <begin position="229"/>
        <end position="246"/>
    </location>
</feature>
<feature type="repeat" description="C-4">
    <location>
        <begin position="247"/>
        <end position="262"/>
    </location>
</feature>
<feature type="repeat" description="B-6">
    <location>
        <begin position="263"/>
        <end position="278"/>
    </location>
</feature>
<feature type="sequence conflict" description="In Ref. 1; AAB03888." evidence="3" ref="1">
    <original>L</original>
    <variation>R</variation>
    <location>
        <position position="7"/>
    </location>
</feature>
<feature type="sequence conflict" description="In Ref. 1; AAB03888." evidence="3" ref="1">
    <original>R</original>
    <variation>T</variation>
    <location>
        <position position="96"/>
    </location>
</feature>
<feature type="sequence conflict" description="In Ref. 1; AAB03888." evidence="3" ref="1">
    <original>K</original>
    <variation>Q</variation>
    <location>
        <position position="131"/>
    </location>
</feature>
<feature type="sequence conflict" description="In Ref. 1; AAB03888." evidence="3" ref="1">
    <original>PDC</original>
    <variation>RRW</variation>
    <location>
        <begin position="252"/>
        <end position="254"/>
    </location>
</feature>
<feature type="sequence conflict" description="In Ref. 1; AAB03888." evidence="3" ref="1">
    <original>D</original>
    <variation>H</variation>
    <location>
        <position position="262"/>
    </location>
</feature>
<sequence>MLNKLILLLILSSCLVLSVKSEVNVDCSLVRCAQPICKPHYRLNMTDSCCGRCEPCTDVACTLQVKYCQDGEVPTGCCPCTLPPTKPDCSLVKCARPVCKPYYRLNMTDSCCGRCEPCTGVACTLQIKYCKDGEVPTGCCPCTPQPTKKPDCSKVPCPKILKYCQEGELPTGCCPCTPQPTKKPDCSRVPCPKILKYCKEGELPTGCCPCTPQPTKKPDCSDVMCTMDIRYCKNGELPTGCCPCTPQETKVPDCSKAMCTMDIKYCKPGEKPFGCCPCRENLTQ</sequence>
<name>D11_DICDI</name>
<reference key="1">
    <citation type="journal article" date="1985" name="Mol. Cell. Biol.">
        <title>Structure of the Dictyostelium discoideum prestalk D11 gene and protein.</title>
        <authorList>
            <person name="Barklis E."/>
            <person name="Pontius B."/>
            <person name="Lodish H.F."/>
        </authorList>
    </citation>
    <scope>NUCLEOTIDE SEQUENCE [GENOMIC DNA]</scope>
    <scope>DEVELOPMENTAL STAGE</scope>
</reference>
<reference key="2">
    <citation type="journal article" date="2002" name="Nature">
        <title>Sequence and analysis of chromosome 2 of Dictyostelium discoideum.</title>
        <authorList>
            <person name="Gloeckner G."/>
            <person name="Eichinger L."/>
            <person name="Szafranski K."/>
            <person name="Pachebat J.A."/>
            <person name="Bankier A.T."/>
            <person name="Dear P.H."/>
            <person name="Lehmann R."/>
            <person name="Baumgart C."/>
            <person name="Parra G."/>
            <person name="Abril J.F."/>
            <person name="Guigo R."/>
            <person name="Kumpf K."/>
            <person name="Tunggal B."/>
            <person name="Cox E.C."/>
            <person name="Quail M.A."/>
            <person name="Platzer M."/>
            <person name="Rosenthal A."/>
            <person name="Noegel A.A."/>
        </authorList>
    </citation>
    <scope>NUCLEOTIDE SEQUENCE [LARGE SCALE GENOMIC DNA]</scope>
    <source>
        <strain>AX4</strain>
    </source>
</reference>
<reference key="3">
    <citation type="journal article" date="2005" name="Nature">
        <title>The genome of the social amoeba Dictyostelium discoideum.</title>
        <authorList>
            <person name="Eichinger L."/>
            <person name="Pachebat J.A."/>
            <person name="Gloeckner G."/>
            <person name="Rajandream M.A."/>
            <person name="Sucgang R."/>
            <person name="Berriman M."/>
            <person name="Song J."/>
            <person name="Olsen R."/>
            <person name="Szafranski K."/>
            <person name="Xu Q."/>
            <person name="Tunggal B."/>
            <person name="Kummerfeld S."/>
            <person name="Madera M."/>
            <person name="Konfortov B.A."/>
            <person name="Rivero F."/>
            <person name="Bankier A.T."/>
            <person name="Lehmann R."/>
            <person name="Hamlin N."/>
            <person name="Davies R."/>
            <person name="Gaudet P."/>
            <person name="Fey P."/>
            <person name="Pilcher K."/>
            <person name="Chen G."/>
            <person name="Saunders D."/>
            <person name="Sodergren E.J."/>
            <person name="Davis P."/>
            <person name="Kerhornou A."/>
            <person name="Nie X."/>
            <person name="Hall N."/>
            <person name="Anjard C."/>
            <person name="Hemphill L."/>
            <person name="Bason N."/>
            <person name="Farbrother P."/>
            <person name="Desany B."/>
            <person name="Just E."/>
            <person name="Morio T."/>
            <person name="Rost R."/>
            <person name="Churcher C.M."/>
            <person name="Cooper J."/>
            <person name="Haydock S."/>
            <person name="van Driessche N."/>
            <person name="Cronin A."/>
            <person name="Goodhead I."/>
            <person name="Muzny D.M."/>
            <person name="Mourier T."/>
            <person name="Pain A."/>
            <person name="Lu M."/>
            <person name="Harper D."/>
            <person name="Lindsay R."/>
            <person name="Hauser H."/>
            <person name="James K.D."/>
            <person name="Quiles M."/>
            <person name="Madan Babu M."/>
            <person name="Saito T."/>
            <person name="Buchrieser C."/>
            <person name="Wardroper A."/>
            <person name="Felder M."/>
            <person name="Thangavelu M."/>
            <person name="Johnson D."/>
            <person name="Knights A."/>
            <person name="Loulseged H."/>
            <person name="Mungall K.L."/>
            <person name="Oliver K."/>
            <person name="Price C."/>
            <person name="Quail M.A."/>
            <person name="Urushihara H."/>
            <person name="Hernandez J."/>
            <person name="Rabbinowitsch E."/>
            <person name="Steffen D."/>
            <person name="Sanders M."/>
            <person name="Ma J."/>
            <person name="Kohara Y."/>
            <person name="Sharp S."/>
            <person name="Simmonds M.N."/>
            <person name="Spiegler S."/>
            <person name="Tivey A."/>
            <person name="Sugano S."/>
            <person name="White B."/>
            <person name="Walker D."/>
            <person name="Woodward J.R."/>
            <person name="Winckler T."/>
            <person name="Tanaka Y."/>
            <person name="Shaulsky G."/>
            <person name="Schleicher M."/>
            <person name="Weinstock G.M."/>
            <person name="Rosenthal A."/>
            <person name="Cox E.C."/>
            <person name="Chisholm R.L."/>
            <person name="Gibbs R.A."/>
            <person name="Loomis W.F."/>
            <person name="Platzer M."/>
            <person name="Kay R.R."/>
            <person name="Williams J.G."/>
            <person name="Dear P.H."/>
            <person name="Noegel A.A."/>
            <person name="Barrell B.G."/>
            <person name="Kuspa A."/>
        </authorList>
    </citation>
    <scope>NUCLEOTIDE SEQUENCE [LARGE SCALE GENOMIC DNA]</scope>
    <source>
        <strain>AX4</strain>
    </source>
</reference>
<keyword id="KW-0217">Developmental protein</keyword>
<keyword id="KW-1185">Reference proteome</keyword>
<keyword id="KW-0677">Repeat</keyword>
<keyword id="KW-0732">Signal</keyword>
<accession>P05817</accession>
<accession>Q553H2</accession>
<accession>Q8T1D1</accession>
<proteinExistence type="evidence at transcript level"/>
<evidence type="ECO:0000255" key="1"/>
<evidence type="ECO:0000269" key="2">
    <source>
    </source>
</evidence>
<evidence type="ECO:0000305" key="3"/>
<organism>
    <name type="scientific">Dictyostelium discoideum</name>
    <name type="common">Social amoeba</name>
    <dbReference type="NCBI Taxonomy" id="44689"/>
    <lineage>
        <taxon>Eukaryota</taxon>
        <taxon>Amoebozoa</taxon>
        <taxon>Evosea</taxon>
        <taxon>Eumycetozoa</taxon>
        <taxon>Dictyostelia</taxon>
        <taxon>Dictyosteliales</taxon>
        <taxon>Dictyosteliaceae</taxon>
        <taxon>Dictyostelium</taxon>
    </lineage>
</organism>
<protein>
    <recommendedName>
        <fullName>Prestalk D11 protein</fullName>
    </recommendedName>
    <alternativeName>
        <fullName>Adhesion modulation protein A</fullName>
    </alternativeName>
</protein>
<gene>
    <name type="primary">ampA</name>
    <name type="synonym">D11</name>
    <name type="ORF">DDB_G0275695</name>
</gene>
<comment type="developmental stage">
    <text evidence="2">Present at low levels in the amoeboid and early developing cells and reaches up to 20-fold higher levels during later stages of development of the fruiting bodies.</text>
</comment>
<comment type="sequence caution" evidence="3">
    <conflict type="frameshift">
        <sequence resource="EMBL-CDS" id="AAB03888"/>
    </conflict>
</comment>